<name>EIF3L_CRYNB</name>
<keyword id="KW-0963">Cytoplasm</keyword>
<keyword id="KW-0396">Initiation factor</keyword>
<keyword id="KW-0648">Protein biosynthesis</keyword>
<protein>
    <recommendedName>
        <fullName evidence="1">Eukaryotic translation initiation factor 3 subunit L</fullName>
        <shortName evidence="1">eIF3l</shortName>
    </recommendedName>
</protein>
<organism>
    <name type="scientific">Cryptococcus neoformans var. neoformans serotype D (strain B-3501A)</name>
    <name type="common">Filobasidiella neoformans</name>
    <dbReference type="NCBI Taxonomy" id="283643"/>
    <lineage>
        <taxon>Eukaryota</taxon>
        <taxon>Fungi</taxon>
        <taxon>Dikarya</taxon>
        <taxon>Basidiomycota</taxon>
        <taxon>Agaricomycotina</taxon>
        <taxon>Tremellomycetes</taxon>
        <taxon>Tremellales</taxon>
        <taxon>Cryptococcaceae</taxon>
        <taxon>Cryptococcus</taxon>
        <taxon>Cryptococcus neoformans species complex</taxon>
    </lineage>
</organism>
<accession>P0CN57</accession>
<accession>Q55M47</accession>
<accession>Q5K8M2</accession>
<proteinExistence type="inferred from homology"/>
<evidence type="ECO:0000255" key="1">
    <source>
        <dbReference type="HAMAP-Rule" id="MF_03011"/>
    </source>
</evidence>
<evidence type="ECO:0000255" key="2">
    <source>
        <dbReference type="PROSITE-ProRule" id="PRU01185"/>
    </source>
</evidence>
<evidence type="ECO:0000256" key="3">
    <source>
        <dbReference type="SAM" id="MobiDB-lite"/>
    </source>
</evidence>
<gene>
    <name type="ordered locus">CNBI1650</name>
</gene>
<dbReference type="EMBL" id="AAEY01000044">
    <property type="protein sequence ID" value="EAL18904.1"/>
    <property type="molecule type" value="Genomic_DNA"/>
</dbReference>
<dbReference type="RefSeq" id="XP_773551.1">
    <property type="nucleotide sequence ID" value="XM_768458.1"/>
</dbReference>
<dbReference type="SMR" id="P0CN57"/>
<dbReference type="GeneID" id="4938125"/>
<dbReference type="KEGG" id="cnb:CNBI1650"/>
<dbReference type="VEuPathDB" id="FungiDB:CNBI1650"/>
<dbReference type="HOGENOM" id="CLU_029210_0_1_1"/>
<dbReference type="OrthoDB" id="5287at5206"/>
<dbReference type="GO" id="GO:0016282">
    <property type="term" value="C:eukaryotic 43S preinitiation complex"/>
    <property type="evidence" value="ECO:0007669"/>
    <property type="project" value="UniProtKB-UniRule"/>
</dbReference>
<dbReference type="GO" id="GO:0033290">
    <property type="term" value="C:eukaryotic 48S preinitiation complex"/>
    <property type="evidence" value="ECO:0007669"/>
    <property type="project" value="UniProtKB-UniRule"/>
</dbReference>
<dbReference type="GO" id="GO:0005852">
    <property type="term" value="C:eukaryotic translation initiation factor 3 complex"/>
    <property type="evidence" value="ECO:0007669"/>
    <property type="project" value="UniProtKB-UniRule"/>
</dbReference>
<dbReference type="GO" id="GO:0003743">
    <property type="term" value="F:translation initiation factor activity"/>
    <property type="evidence" value="ECO:0007669"/>
    <property type="project" value="UniProtKB-UniRule"/>
</dbReference>
<dbReference type="GO" id="GO:0001732">
    <property type="term" value="P:formation of cytoplasmic translation initiation complex"/>
    <property type="evidence" value="ECO:0007669"/>
    <property type="project" value="UniProtKB-UniRule"/>
</dbReference>
<dbReference type="HAMAP" id="MF_03011">
    <property type="entry name" value="eIF3l"/>
    <property type="match status" value="1"/>
</dbReference>
<dbReference type="InterPro" id="IPR019382">
    <property type="entry name" value="eIF3l"/>
</dbReference>
<dbReference type="InterPro" id="IPR000717">
    <property type="entry name" value="PCI_dom"/>
</dbReference>
<dbReference type="PANTHER" id="PTHR13242">
    <property type="entry name" value="EUKARYOTIC TRANSLATION INITIATION FACTOR 3"/>
    <property type="match status" value="1"/>
</dbReference>
<dbReference type="PANTHER" id="PTHR13242:SF0">
    <property type="entry name" value="EUKARYOTIC TRANSLATION INITIATION FACTOR 3 SUBUNIT L"/>
    <property type="match status" value="1"/>
</dbReference>
<dbReference type="Pfam" id="PF10255">
    <property type="entry name" value="Paf67"/>
    <property type="match status" value="1"/>
</dbReference>
<dbReference type="PROSITE" id="PS50250">
    <property type="entry name" value="PCI"/>
    <property type="match status" value="1"/>
</dbReference>
<reference key="1">
    <citation type="journal article" date="2005" name="Science">
        <title>The genome of the basidiomycetous yeast and human pathogen Cryptococcus neoformans.</title>
        <authorList>
            <person name="Loftus B.J."/>
            <person name="Fung E."/>
            <person name="Roncaglia P."/>
            <person name="Rowley D."/>
            <person name="Amedeo P."/>
            <person name="Bruno D."/>
            <person name="Vamathevan J."/>
            <person name="Miranda M."/>
            <person name="Anderson I.J."/>
            <person name="Fraser J.A."/>
            <person name="Allen J.E."/>
            <person name="Bosdet I.E."/>
            <person name="Brent M.R."/>
            <person name="Chiu R."/>
            <person name="Doering T.L."/>
            <person name="Donlin M.J."/>
            <person name="D'Souza C.A."/>
            <person name="Fox D.S."/>
            <person name="Grinberg V."/>
            <person name="Fu J."/>
            <person name="Fukushima M."/>
            <person name="Haas B.J."/>
            <person name="Huang J.C."/>
            <person name="Janbon G."/>
            <person name="Jones S.J.M."/>
            <person name="Koo H.L."/>
            <person name="Krzywinski M.I."/>
            <person name="Kwon-Chung K.J."/>
            <person name="Lengeler K.B."/>
            <person name="Maiti R."/>
            <person name="Marra M.A."/>
            <person name="Marra R.E."/>
            <person name="Mathewson C.A."/>
            <person name="Mitchell T.G."/>
            <person name="Pertea M."/>
            <person name="Riggs F.R."/>
            <person name="Salzberg S.L."/>
            <person name="Schein J.E."/>
            <person name="Shvartsbeyn A."/>
            <person name="Shin H."/>
            <person name="Shumway M."/>
            <person name="Specht C.A."/>
            <person name="Suh B.B."/>
            <person name="Tenney A."/>
            <person name="Utterback T.R."/>
            <person name="Wickes B.L."/>
            <person name="Wortman J.R."/>
            <person name="Wye N.H."/>
            <person name="Kronstad J.W."/>
            <person name="Lodge J.K."/>
            <person name="Heitman J."/>
            <person name="Davis R.W."/>
            <person name="Fraser C.M."/>
            <person name="Hyman R.W."/>
        </authorList>
    </citation>
    <scope>NUCLEOTIDE SEQUENCE [LARGE SCALE GENOMIC DNA]</scope>
    <source>
        <strain>B-3501A</strain>
    </source>
</reference>
<feature type="chain" id="PRO_0000410082" description="Eukaryotic translation initiation factor 3 subunit L">
    <location>
        <begin position="1"/>
        <end position="631"/>
    </location>
</feature>
<feature type="domain" description="PCI" evidence="2">
    <location>
        <begin position="335"/>
        <end position="526"/>
    </location>
</feature>
<feature type="region of interest" description="Disordered" evidence="3">
    <location>
        <begin position="571"/>
        <end position="631"/>
    </location>
</feature>
<feature type="compositionally biased region" description="Low complexity" evidence="3">
    <location>
        <begin position="580"/>
        <end position="612"/>
    </location>
</feature>
<comment type="function">
    <text evidence="1">Component of the eukaryotic translation initiation factor 3 (eIF-3) complex, which is involved in protein synthesis of a specialized repertoire of mRNAs and, together with other initiation factors, stimulates binding of mRNA and methionyl-tRNAi to the 40S ribosome. The eIF-3 complex specifically targets and initiates translation of a subset of mRNAs involved in cell proliferation.</text>
</comment>
<comment type="subunit">
    <text evidence="1">Component of the eukaryotic translation initiation factor 3 (eIF-3) complex.</text>
</comment>
<comment type="subcellular location">
    <subcellularLocation>
        <location evidence="1">Cytoplasm</location>
    </subcellularLocation>
</comment>
<comment type="similarity">
    <text evidence="1">Belongs to the eIF-3 subunit L family.</text>
</comment>
<sequence length="631" mass="70880">MADPSAFYEPEEDELLSQLAIPIQNYQPLSEGDEYRRLQQLEQHAYAQQTAMAQEQEMEQLAVLELIPEDVKRFLVMFHQAILENDLPTITSMYESGWNKLTQAHYLNNEWPEAELIAPLVGNDQVFLTLYRELYFRHVYARLQPTIDDRFQSYENICELFNYLLNSEGPVPLDLPIQWLWDMLDEFVYQFTSFSHWRSSPKAKTEEELEMLAESPNIWSSYSVLNVLYSLVQKSQINEQLKAERAGKSVEEVTEVAGEYGSKPLYKNLGYFSLICLLHVHVLLGDPTLALQTMENVDLGNAAFLTRITACHVTTYYHVGCAYMALGRWPDAIKTFVSVLIFFIRMKQYHTRSYQYGSIAKTCERMYALLAICTTLSPGPSDENIMTIVKEHYGDQLAILQRGGPEALEAFKDLYLQACPKYLNVNPPPYEDASALEAWLANPPADATQRHLELFLSDVQAVQGVNGMRNLLKLYTSIDAAKLAAFSVSGEEEGEEEVLQQLMVLKSASSTYGRGQAETTLLDGERKVTNNLDFTIDGTMVHVEETTSHRRYAGFFIRNAEHAQRALTSIKSAPLPVRKPASSSAPAPATTAAPISKSGESAAPAPAEAPAAPEKKAGTWVPKSRQARIAA</sequence>